<proteinExistence type="inferred from homology"/>
<reference key="1">
    <citation type="journal article" date="2003" name="Proc. Natl. Acad. Sci. U.S.A.">
        <title>The complete genome sequence of Mycobacterium bovis.</title>
        <authorList>
            <person name="Garnier T."/>
            <person name="Eiglmeier K."/>
            <person name="Camus J.-C."/>
            <person name="Medina N."/>
            <person name="Mansoor H."/>
            <person name="Pryor M."/>
            <person name="Duthoy S."/>
            <person name="Grondin S."/>
            <person name="Lacroix C."/>
            <person name="Monsempe C."/>
            <person name="Simon S."/>
            <person name="Harris B."/>
            <person name="Atkin R."/>
            <person name="Doggett J."/>
            <person name="Mayes R."/>
            <person name="Keating L."/>
            <person name="Wheeler P.R."/>
            <person name="Parkhill J."/>
            <person name="Barrell B.G."/>
            <person name="Cole S.T."/>
            <person name="Gordon S.V."/>
            <person name="Hewinson R.G."/>
        </authorList>
    </citation>
    <scope>NUCLEOTIDE SEQUENCE [LARGE SCALE GENOMIC DNA]</scope>
    <source>
        <strain>ATCC BAA-935 / AF2122/97</strain>
    </source>
</reference>
<reference key="2">
    <citation type="journal article" date="2017" name="Genome Announc.">
        <title>Updated reference genome sequence and annotation of Mycobacterium bovis AF2122/97.</title>
        <authorList>
            <person name="Malone K.M."/>
            <person name="Farrell D."/>
            <person name="Stuber T.P."/>
            <person name="Schubert O.T."/>
            <person name="Aebersold R."/>
            <person name="Robbe-Austerman S."/>
            <person name="Gordon S.V."/>
        </authorList>
    </citation>
    <scope>NUCLEOTIDE SEQUENCE [LARGE SCALE GENOMIC DNA]</scope>
    <scope>GENOME REANNOTATION</scope>
    <source>
        <strain>ATCC BAA-935 / AF2122/97</strain>
    </source>
</reference>
<protein>
    <recommendedName>
        <fullName evidence="1">Phosphatidylglycerol--prolipoprotein diacylglyceryl transferase</fullName>
        <ecNumber evidence="1">2.5.1.145</ecNumber>
    </recommendedName>
</protein>
<name>LGT_MYCBO</name>
<feature type="chain" id="PRO_0000172631" description="Phosphatidylglycerol--prolipoprotein diacylglyceryl transferase">
    <location>
        <begin position="1"/>
        <end position="468"/>
    </location>
</feature>
<feature type="transmembrane region" description="Helical" evidence="1">
    <location>
        <begin position="21"/>
        <end position="41"/>
    </location>
</feature>
<feature type="transmembrane region" description="Helical" evidence="1">
    <location>
        <begin position="56"/>
        <end position="76"/>
    </location>
</feature>
<feature type="transmembrane region" description="Helical" evidence="1">
    <location>
        <begin position="96"/>
        <end position="116"/>
    </location>
</feature>
<feature type="transmembrane region" description="Helical" evidence="1">
    <location>
        <begin position="192"/>
        <end position="212"/>
    </location>
</feature>
<feature type="transmembrane region" description="Helical" evidence="1">
    <location>
        <begin position="218"/>
        <end position="238"/>
    </location>
</feature>
<feature type="transmembrane region" description="Helical" evidence="1">
    <location>
        <begin position="256"/>
        <end position="276"/>
    </location>
</feature>
<feature type="region of interest" description="Disordered" evidence="2">
    <location>
        <begin position="349"/>
        <end position="468"/>
    </location>
</feature>
<feature type="compositionally biased region" description="Low complexity" evidence="2">
    <location>
        <begin position="391"/>
        <end position="406"/>
    </location>
</feature>
<feature type="compositionally biased region" description="Basic and acidic residues" evidence="2">
    <location>
        <begin position="445"/>
        <end position="455"/>
    </location>
</feature>
<feature type="compositionally biased region" description="Basic residues" evidence="2">
    <location>
        <begin position="456"/>
        <end position="468"/>
    </location>
</feature>
<feature type="binding site" evidence="1">
    <location>
        <position position="144"/>
    </location>
    <ligand>
        <name>a 1,2-diacyl-sn-glycero-3-phospho-(1'-sn-glycerol)</name>
        <dbReference type="ChEBI" id="CHEBI:64716"/>
    </ligand>
</feature>
<gene>
    <name evidence="1" type="primary">lgt</name>
    <name type="ordered locus">BQ2027_MB1640</name>
</gene>
<organism>
    <name type="scientific">Mycobacterium bovis (strain ATCC BAA-935 / AF2122/97)</name>
    <dbReference type="NCBI Taxonomy" id="233413"/>
    <lineage>
        <taxon>Bacteria</taxon>
        <taxon>Bacillati</taxon>
        <taxon>Actinomycetota</taxon>
        <taxon>Actinomycetes</taxon>
        <taxon>Mycobacteriales</taxon>
        <taxon>Mycobacteriaceae</taxon>
        <taxon>Mycobacterium</taxon>
        <taxon>Mycobacterium tuberculosis complex</taxon>
    </lineage>
</organism>
<comment type="function">
    <text evidence="1">Catalyzes the transfer of the diacylglyceryl group from phosphatidylglycerol to the sulfhydryl group of the N-terminal cysteine of a prolipoprotein, the first step in the formation of mature lipoproteins.</text>
</comment>
<comment type="catalytic activity">
    <reaction evidence="1">
        <text>L-cysteinyl-[prolipoprotein] + a 1,2-diacyl-sn-glycero-3-phospho-(1'-sn-glycerol) = an S-1,2-diacyl-sn-glyceryl-L-cysteinyl-[prolipoprotein] + sn-glycerol 1-phosphate + H(+)</text>
        <dbReference type="Rhea" id="RHEA:56712"/>
        <dbReference type="Rhea" id="RHEA-COMP:14679"/>
        <dbReference type="Rhea" id="RHEA-COMP:14680"/>
        <dbReference type="ChEBI" id="CHEBI:15378"/>
        <dbReference type="ChEBI" id="CHEBI:29950"/>
        <dbReference type="ChEBI" id="CHEBI:57685"/>
        <dbReference type="ChEBI" id="CHEBI:64716"/>
        <dbReference type="ChEBI" id="CHEBI:140658"/>
        <dbReference type="EC" id="2.5.1.145"/>
    </reaction>
</comment>
<comment type="pathway">
    <text evidence="1">Protein modification; lipoprotein biosynthesis (diacylglyceryl transfer).</text>
</comment>
<comment type="subcellular location">
    <subcellularLocation>
        <location evidence="1">Cell membrane</location>
        <topology evidence="1">Multi-pass membrane protein</topology>
    </subcellularLocation>
</comment>
<comment type="similarity">
    <text evidence="1">Belongs to the Lgt family.</text>
</comment>
<accession>Q7VEW5</accession>
<accession>A0A1R3XZQ5</accession>
<accession>X2BIC7</accession>
<keyword id="KW-1003">Cell membrane</keyword>
<keyword id="KW-0472">Membrane</keyword>
<keyword id="KW-1185">Reference proteome</keyword>
<keyword id="KW-0808">Transferase</keyword>
<keyword id="KW-0812">Transmembrane</keyword>
<keyword id="KW-1133">Transmembrane helix</keyword>
<dbReference type="EC" id="2.5.1.145" evidence="1"/>
<dbReference type="EMBL" id="LT708304">
    <property type="protein sequence ID" value="SIU00244.1"/>
    <property type="molecule type" value="Genomic_DNA"/>
</dbReference>
<dbReference type="RefSeq" id="NP_855293.1">
    <property type="nucleotide sequence ID" value="NC_002945.3"/>
</dbReference>
<dbReference type="RefSeq" id="WP_003408002.1">
    <property type="nucleotide sequence ID" value="NC_002945.4"/>
</dbReference>
<dbReference type="SMR" id="Q7VEW5"/>
<dbReference type="KEGG" id="mbo:BQ2027_MB1640"/>
<dbReference type="PATRIC" id="fig|233413.5.peg.1789"/>
<dbReference type="UniPathway" id="UPA00664"/>
<dbReference type="Proteomes" id="UP000001419">
    <property type="component" value="Chromosome"/>
</dbReference>
<dbReference type="GO" id="GO:0005886">
    <property type="term" value="C:plasma membrane"/>
    <property type="evidence" value="ECO:0007669"/>
    <property type="project" value="UniProtKB-SubCell"/>
</dbReference>
<dbReference type="GO" id="GO:0008961">
    <property type="term" value="F:phosphatidylglycerol-prolipoprotein diacylglyceryl transferase activity"/>
    <property type="evidence" value="ECO:0007669"/>
    <property type="project" value="UniProtKB-UniRule"/>
</dbReference>
<dbReference type="GO" id="GO:0042158">
    <property type="term" value="P:lipoprotein biosynthetic process"/>
    <property type="evidence" value="ECO:0007669"/>
    <property type="project" value="UniProtKB-UniRule"/>
</dbReference>
<dbReference type="HAMAP" id="MF_01147">
    <property type="entry name" value="Lgt"/>
    <property type="match status" value="1"/>
</dbReference>
<dbReference type="InterPro" id="IPR001640">
    <property type="entry name" value="Lgt"/>
</dbReference>
<dbReference type="NCBIfam" id="TIGR00544">
    <property type="entry name" value="lgt"/>
    <property type="match status" value="1"/>
</dbReference>
<dbReference type="NCBIfam" id="NF009611">
    <property type="entry name" value="PRK13108.1"/>
    <property type="match status" value="1"/>
</dbReference>
<dbReference type="PANTHER" id="PTHR30589:SF0">
    <property type="entry name" value="PHOSPHATIDYLGLYCEROL--PROLIPOPROTEIN DIACYLGLYCERYL TRANSFERASE"/>
    <property type="match status" value="1"/>
</dbReference>
<dbReference type="PANTHER" id="PTHR30589">
    <property type="entry name" value="PROLIPOPROTEIN DIACYLGLYCERYL TRANSFERASE"/>
    <property type="match status" value="1"/>
</dbReference>
<dbReference type="Pfam" id="PF01790">
    <property type="entry name" value="LGT"/>
    <property type="match status" value="1"/>
</dbReference>
<dbReference type="PROSITE" id="PS01311">
    <property type="entry name" value="LGT"/>
    <property type="match status" value="1"/>
</dbReference>
<evidence type="ECO:0000255" key="1">
    <source>
        <dbReference type="HAMAP-Rule" id="MF_01147"/>
    </source>
</evidence>
<evidence type="ECO:0000256" key="2">
    <source>
        <dbReference type="SAM" id="MobiDB-lite"/>
    </source>
</evidence>
<sequence>MRMLPSYIPSPPRGVWYLGPLPVRAYAVCVITGIIVALLIGDRRLTARGGERGMTYDIALWAVPFGLIGGRLYHLATDWRTYFGDGGAGLAAALRIWDGGLGIWGAVTLGVMGAWIGCRRCGIPLPVLLDAVAPGVVLAQAIGRLGNYFNQELYGRETTMPWGLEIFYRRDPSGFDVPNSLDGVSTGQVAFVVQPTFLYELIWNVLVFVALIYIDRRFIIGHGRLFGFYVAFYCAGRFCVELLRDDPATLIAGIRINSFTSTFVFIGAVVYIILAPKGREAPGALRGSEYVVDEALEREPAELAAAAVASAASAVGPVGPGEPNQPDDVAEAVKAEVAEVTDEVAAESVVQVADRDGESTPAVEETSEADIEREQPGDLAGQAPAAHQVDAEAASAAPEEPAALASEAHDETEPEVPEKAAPIPDPAKPDELAVAGPGDDPAEPDGIRRQDDFSSRRRRWWRLRRRRQ</sequence>